<feature type="chain" id="PRO_0000431344" description="Alkyl hydroperoxide reductase C">
    <location>
        <begin position="1"/>
        <end position="187"/>
    </location>
</feature>
<feature type="domain" description="Thioredoxin" evidence="3">
    <location>
        <begin position="2"/>
        <end position="157"/>
    </location>
</feature>
<feature type="active site" description="Cysteine sulfenic acid (-SOH) intermediate" evidence="1">
    <location>
        <position position="47"/>
    </location>
</feature>
<feature type="disulfide bond" description="Interchain (with C-166); in linked form" evidence="1">
    <location>
        <position position="47"/>
    </location>
</feature>
<feature type="disulfide bond" description="Interchain (with C-47); in linked form" evidence="1">
    <location>
        <position position="166"/>
    </location>
</feature>
<proteinExistence type="evidence at protein level"/>
<reference key="1">
    <citation type="journal article" date="2006" name="Genome Biol.">
        <title>Genomic analysis reveals that Pseudomonas aeruginosa virulence is combinatorial.</title>
        <authorList>
            <person name="Lee D.G."/>
            <person name="Urbach J.M."/>
            <person name="Wu G."/>
            <person name="Liberati N.T."/>
            <person name="Feinbaum R.L."/>
            <person name="Miyata S."/>
            <person name="Diggins L.T."/>
            <person name="He J."/>
            <person name="Saucier M."/>
            <person name="Deziel E."/>
            <person name="Friedman L."/>
            <person name="Li L."/>
            <person name="Grills G."/>
            <person name="Montgomery K."/>
            <person name="Kucherlapati R."/>
            <person name="Rahme L.G."/>
            <person name="Ausubel F.M."/>
        </authorList>
    </citation>
    <scope>NUCLEOTIDE SEQUENCE [LARGE SCALE GENOMIC DNA]</scope>
    <source>
        <strain>UCBPP-PA14</strain>
    </source>
</reference>
<reference key="2">
    <citation type="journal article" date="2014" name="Anal. Bioanal. Chem.">
        <title>Potential of liquid-isoelectric-focusing protein fractionation to improve phosphoprotein characterization of Pseudomonas aeruginosa PA14.</title>
        <authorList>
            <person name="Ouidir T."/>
            <person name="Jarnier F."/>
            <person name="Cosette P."/>
            <person name="Jouenne T."/>
            <person name="Hardouin J."/>
        </authorList>
    </citation>
    <scope>IDENTIFICATION BY MASS SPECTROMETRY</scope>
    <source>
        <strain>UCBPP-PA14</strain>
    </source>
</reference>
<reference key="3">
    <citation type="journal article" date="2014" name="Proteomics">
        <title>Extracellular Ser/Thr/Tyr phosphorylated proteins of Pseudomonas aeruginosa PA14 strain.</title>
        <authorList>
            <person name="Ouidir T."/>
            <person name="Jarnier F."/>
            <person name="Cosette P."/>
            <person name="Jouenne T."/>
            <person name="Hardouin J."/>
        </authorList>
    </citation>
    <scope>IDENTIFICATION BY MASS SPECTROMETRY</scope>
    <scope>SUBCELLULAR LOCATION</scope>
    <source>
        <strain>UCBPP-PA14</strain>
    </source>
</reference>
<evidence type="ECO:0000250" key="1">
    <source>
        <dbReference type="UniProtKB" id="P0A251"/>
    </source>
</evidence>
<evidence type="ECO:0000250" key="2">
    <source>
        <dbReference type="UniProtKB" id="P0AE08"/>
    </source>
</evidence>
<evidence type="ECO:0000255" key="3">
    <source>
        <dbReference type="PROSITE-ProRule" id="PRU00691"/>
    </source>
</evidence>
<evidence type="ECO:0000269" key="4">
    <source>
    </source>
</evidence>
<evidence type="ECO:0000305" key="5"/>
<comment type="function">
    <text evidence="1">Thiol-specific peroxidase that catalyzes the reduction of hydrogen peroxide and organic hydroperoxides to water and alcohols, respectively. Plays a role in cell protection against oxidative stress by detoxifying peroxides.</text>
</comment>
<comment type="catalytic activity">
    <reaction evidence="1">
        <text>a hydroperoxide + NADH + H(+) = an alcohol + NAD(+) + H2O</text>
        <dbReference type="Rhea" id="RHEA:62628"/>
        <dbReference type="ChEBI" id="CHEBI:15377"/>
        <dbReference type="ChEBI" id="CHEBI:15378"/>
        <dbReference type="ChEBI" id="CHEBI:30879"/>
        <dbReference type="ChEBI" id="CHEBI:35924"/>
        <dbReference type="ChEBI" id="CHEBI:57540"/>
        <dbReference type="ChEBI" id="CHEBI:57945"/>
        <dbReference type="EC" id="1.11.1.26"/>
    </reaction>
</comment>
<comment type="subunit">
    <text evidence="1">Homodimer; disulfide-linked, upon oxidation. 5 homodimers assemble to form a ring-like decamer.</text>
</comment>
<comment type="subcellular location">
    <subcellularLocation>
        <location evidence="2">Cytoplasm</location>
    </subcellularLocation>
    <subcellularLocation>
        <location evidence="4">Secreted</location>
    </subcellularLocation>
    <text evidence="5">Could be present extracellularly due to cell lysis.</text>
</comment>
<comment type="miscellaneous">
    <text evidence="1">The active site is a conserved redox-active cysteine residue, the peroxidatic cysteine (C(P)), which makes the nucleophilic attack on the peroxide substrate. The peroxide oxidizes the C(P)-SH to cysteine sulfenic acid (C(P)-SOH), which then reacts with another cysteine residue, the resolving cysteine (C(R)), to form a disulfide bridge. The disulfide is subsequently reduced by an appropriate electron donor to complete the catalytic cycle. In this typical 2-Cys peroxiredoxin, C(R) is provided by the other dimeric subunit to form an intersubunit disulfide. The disulfide is subsequently reduced by AhpF.</text>
</comment>
<comment type="similarity">
    <text evidence="5">Belongs to the peroxiredoxin family. AhpC/Prx1 subfamily.</text>
</comment>
<protein>
    <recommendedName>
        <fullName>Alkyl hydroperoxide reductase C</fullName>
        <ecNumber evidence="1">1.11.1.26</ecNumber>
    </recommendedName>
    <alternativeName>
        <fullName>Peroxiredoxin</fullName>
    </alternativeName>
    <alternativeName>
        <fullName>Thioredoxin peroxidase</fullName>
    </alternativeName>
</protein>
<name>AHPC_PSEAB</name>
<sequence length="187" mass="20541">MSLINTQVQPFKVNAFHNGKFIEVTEESLKGKWSVLIFMPAAFTFNCPTEIEDAANNYGEFQKAGAEVYIVTTDTHFSHKVWHETSPAVGKAQFPLIGDPTHQLTNAFGVHIPEEGLALRGTFVINPEGVIKTVEIHSNEIARDVGETVRKLKAAQYTAAHPGEVCPAKWKEGEKTLAPSLDLVGKI</sequence>
<gene>
    <name type="primary">ahpC</name>
    <name type="ordered locus">PA14_01710</name>
</gene>
<keyword id="KW-0049">Antioxidant</keyword>
<keyword id="KW-0963">Cytoplasm</keyword>
<keyword id="KW-1015">Disulfide bond</keyword>
<keyword id="KW-0560">Oxidoreductase</keyword>
<keyword id="KW-0575">Peroxidase</keyword>
<keyword id="KW-0676">Redox-active center</keyword>
<keyword id="KW-0964">Secreted</keyword>
<dbReference type="EC" id="1.11.1.26" evidence="1"/>
<dbReference type="EMBL" id="CP000438">
    <property type="protein sequence ID" value="ABJ15095.1"/>
    <property type="molecule type" value="Genomic_DNA"/>
</dbReference>
<dbReference type="RefSeq" id="WP_003083828.1">
    <property type="nucleotide sequence ID" value="NZ_CP034244.1"/>
</dbReference>
<dbReference type="SMR" id="Q02UU0"/>
<dbReference type="GeneID" id="77218684"/>
<dbReference type="KEGG" id="pau:PA14_01710"/>
<dbReference type="PseudoCAP" id="PA14_01710"/>
<dbReference type="HOGENOM" id="CLU_042529_21_3_6"/>
<dbReference type="BioCyc" id="PAER208963:G1G74-144-MONOMER"/>
<dbReference type="Proteomes" id="UP000000653">
    <property type="component" value="Chromosome"/>
</dbReference>
<dbReference type="GO" id="GO:0005829">
    <property type="term" value="C:cytosol"/>
    <property type="evidence" value="ECO:0007669"/>
    <property type="project" value="TreeGrafter"/>
</dbReference>
<dbReference type="GO" id="GO:0005576">
    <property type="term" value="C:extracellular region"/>
    <property type="evidence" value="ECO:0007669"/>
    <property type="project" value="UniProtKB-SubCell"/>
</dbReference>
<dbReference type="GO" id="GO:0102039">
    <property type="term" value="F:NADH-dependent peroxiredoxin activity"/>
    <property type="evidence" value="ECO:0007669"/>
    <property type="project" value="UniProtKB-EC"/>
</dbReference>
<dbReference type="GO" id="GO:0008379">
    <property type="term" value="F:thioredoxin peroxidase activity"/>
    <property type="evidence" value="ECO:0007669"/>
    <property type="project" value="TreeGrafter"/>
</dbReference>
<dbReference type="GO" id="GO:0045454">
    <property type="term" value="P:cell redox homeostasis"/>
    <property type="evidence" value="ECO:0007669"/>
    <property type="project" value="TreeGrafter"/>
</dbReference>
<dbReference type="GO" id="GO:0033554">
    <property type="term" value="P:cellular response to stress"/>
    <property type="evidence" value="ECO:0007669"/>
    <property type="project" value="TreeGrafter"/>
</dbReference>
<dbReference type="GO" id="GO:0042744">
    <property type="term" value="P:hydrogen peroxide catabolic process"/>
    <property type="evidence" value="ECO:0007669"/>
    <property type="project" value="TreeGrafter"/>
</dbReference>
<dbReference type="GO" id="GO:0006979">
    <property type="term" value="P:response to oxidative stress"/>
    <property type="evidence" value="ECO:0007669"/>
    <property type="project" value="InterPro"/>
</dbReference>
<dbReference type="CDD" id="cd03015">
    <property type="entry name" value="PRX_Typ2cys"/>
    <property type="match status" value="1"/>
</dbReference>
<dbReference type="FunFam" id="3.40.30.10:FF:000002">
    <property type="entry name" value="Alkyl hydroperoxide reductase C"/>
    <property type="match status" value="1"/>
</dbReference>
<dbReference type="Gene3D" id="3.40.30.10">
    <property type="entry name" value="Glutaredoxin"/>
    <property type="match status" value="1"/>
</dbReference>
<dbReference type="InterPro" id="IPR017559">
    <property type="entry name" value="AhpC"/>
</dbReference>
<dbReference type="InterPro" id="IPR000866">
    <property type="entry name" value="AhpC/TSA"/>
</dbReference>
<dbReference type="InterPro" id="IPR050217">
    <property type="entry name" value="Peroxiredoxin"/>
</dbReference>
<dbReference type="InterPro" id="IPR024706">
    <property type="entry name" value="Peroxiredoxin_AhpC-typ"/>
</dbReference>
<dbReference type="InterPro" id="IPR019479">
    <property type="entry name" value="Peroxiredoxin_C"/>
</dbReference>
<dbReference type="InterPro" id="IPR036249">
    <property type="entry name" value="Thioredoxin-like_sf"/>
</dbReference>
<dbReference type="InterPro" id="IPR013766">
    <property type="entry name" value="Thioredoxin_domain"/>
</dbReference>
<dbReference type="NCBIfam" id="TIGR03137">
    <property type="entry name" value="AhpC"/>
    <property type="match status" value="1"/>
</dbReference>
<dbReference type="PANTHER" id="PTHR10681:SF121">
    <property type="entry name" value="ALKYL HYDROPEROXIDE REDUCTASE C"/>
    <property type="match status" value="1"/>
</dbReference>
<dbReference type="PANTHER" id="PTHR10681">
    <property type="entry name" value="THIOREDOXIN PEROXIDASE"/>
    <property type="match status" value="1"/>
</dbReference>
<dbReference type="Pfam" id="PF10417">
    <property type="entry name" value="1-cysPrx_C"/>
    <property type="match status" value="1"/>
</dbReference>
<dbReference type="Pfam" id="PF00578">
    <property type="entry name" value="AhpC-TSA"/>
    <property type="match status" value="1"/>
</dbReference>
<dbReference type="PIRSF" id="PIRSF000239">
    <property type="entry name" value="AHPC"/>
    <property type="match status" value="1"/>
</dbReference>
<dbReference type="SUPFAM" id="SSF52833">
    <property type="entry name" value="Thioredoxin-like"/>
    <property type="match status" value="1"/>
</dbReference>
<dbReference type="PROSITE" id="PS51352">
    <property type="entry name" value="THIOREDOXIN_2"/>
    <property type="match status" value="1"/>
</dbReference>
<accession>Q02UU0</accession>
<organism>
    <name type="scientific">Pseudomonas aeruginosa (strain UCBPP-PA14)</name>
    <dbReference type="NCBI Taxonomy" id="208963"/>
    <lineage>
        <taxon>Bacteria</taxon>
        <taxon>Pseudomonadati</taxon>
        <taxon>Pseudomonadota</taxon>
        <taxon>Gammaproteobacteria</taxon>
        <taxon>Pseudomonadales</taxon>
        <taxon>Pseudomonadaceae</taxon>
        <taxon>Pseudomonas</taxon>
    </lineage>
</organism>